<reference key="1">
    <citation type="journal article" date="2004" name="J. Infect. Dis.">
        <title>Progress toward characterization of the group A Streptococcus metagenome: complete genome sequence of a macrolide-resistant serotype M6 strain.</title>
        <authorList>
            <person name="Banks D.J."/>
            <person name="Porcella S.F."/>
            <person name="Barbian K.D."/>
            <person name="Beres S.B."/>
            <person name="Philips L.E."/>
            <person name="Voyich J.M."/>
            <person name="DeLeo F.R."/>
            <person name="Martin J.M."/>
            <person name="Somerville G.A."/>
            <person name="Musser J.M."/>
        </authorList>
    </citation>
    <scope>NUCLEOTIDE SEQUENCE [LARGE SCALE GENOMIC DNA]</scope>
    <source>
        <strain>ATCC BAA-946 / MGAS10394</strain>
    </source>
</reference>
<evidence type="ECO:0000305" key="1"/>
<protein>
    <recommendedName>
        <fullName>Putative NrdI-like protein</fullName>
    </recommendedName>
</protein>
<dbReference type="EMBL" id="CP000003">
    <property type="protein sequence ID" value="AAT87831.1"/>
    <property type="molecule type" value="Genomic_DNA"/>
</dbReference>
<dbReference type="SMR" id="Q5X9T2"/>
<dbReference type="KEGG" id="spa:M6_Spy1696"/>
<dbReference type="HOGENOM" id="CLU_114845_1_0_9"/>
<dbReference type="Proteomes" id="UP000001167">
    <property type="component" value="Chromosome"/>
</dbReference>
<dbReference type="GO" id="GO:0010181">
    <property type="term" value="F:FMN binding"/>
    <property type="evidence" value="ECO:0007669"/>
    <property type="project" value="InterPro"/>
</dbReference>
<dbReference type="GO" id="GO:0036211">
    <property type="term" value="P:protein modification process"/>
    <property type="evidence" value="ECO:0007669"/>
    <property type="project" value="InterPro"/>
</dbReference>
<dbReference type="Gene3D" id="3.40.50.360">
    <property type="match status" value="1"/>
</dbReference>
<dbReference type="InterPro" id="IPR029039">
    <property type="entry name" value="Flavoprotein-like_sf"/>
</dbReference>
<dbReference type="InterPro" id="IPR004465">
    <property type="entry name" value="RNR_NrdI"/>
</dbReference>
<dbReference type="NCBIfam" id="NF002714">
    <property type="entry name" value="PRK02551.1"/>
    <property type="match status" value="1"/>
</dbReference>
<dbReference type="PANTHER" id="PTHR37297">
    <property type="entry name" value="PROTEIN NRDI"/>
    <property type="match status" value="1"/>
</dbReference>
<dbReference type="PANTHER" id="PTHR37297:SF1">
    <property type="entry name" value="PROTEIN NRDI"/>
    <property type="match status" value="1"/>
</dbReference>
<dbReference type="Pfam" id="PF07972">
    <property type="entry name" value="Flavodoxin_NdrI"/>
    <property type="match status" value="1"/>
</dbReference>
<dbReference type="PIRSF" id="PIRSF005087">
    <property type="entry name" value="NrdI"/>
    <property type="match status" value="1"/>
</dbReference>
<dbReference type="SUPFAM" id="SSF52218">
    <property type="entry name" value="Flavoproteins"/>
    <property type="match status" value="1"/>
</dbReference>
<name>NRDIL_STRP6</name>
<gene>
    <name type="ordered locus">M6_Spy1696</name>
</gene>
<proteinExistence type="inferred from homology"/>
<organism>
    <name type="scientific">Streptococcus pyogenes serotype M6 (strain ATCC BAA-946 / MGAS10394)</name>
    <dbReference type="NCBI Taxonomy" id="286636"/>
    <lineage>
        <taxon>Bacteria</taxon>
        <taxon>Bacillati</taxon>
        <taxon>Bacillota</taxon>
        <taxon>Bacilli</taxon>
        <taxon>Lactobacillales</taxon>
        <taxon>Streptococcaceae</taxon>
        <taxon>Streptococcus</taxon>
    </lineage>
</organism>
<comment type="similarity">
    <text evidence="1">Belongs to the NrdI family.</text>
</comment>
<sequence>MPQITLVFISLSGNTLSFVKRLSLYLADNYDYHVKQINIKDLKHETFPVKEEFVAILPTYLEGGNGVDSGEVEILTTPLGEFIAAHGNAQRCLGIIGSGNKNFNHQYCLTAKQYAKRFGFPLLGDFELRGTPDDISRLAQLIMEASSRHSSNDTQTLPNS</sequence>
<feature type="chain" id="PRO_0000164354" description="Putative NrdI-like protein">
    <location>
        <begin position="1"/>
        <end position="160"/>
    </location>
</feature>
<accession>Q5X9T2</accession>